<sequence length="525" mass="60724">MAGLWLGLVWQKLLLWGAASALSLAGASLVLSLLQRVASYARKWQQMRPIPTVARAYPLVGHALLMKPDGREFFQQIIEYTEEYRHMPLLKLWVGPVPMVALYNAENVEVILTSSKQIDKSSMYKFLEPWLGLGLLTSTGNKWRSRRKMLTPTFHFTILEDFLDIMNEQANILVKKLEKHINQEAFNCFFYITLCALDIICETAMGKNIGAQSNDDSEYVRAVYRMSEMIFRRIKMPWLWLDLWYLMFKEGWEHKKSLQILHTFTNSVIAERANEMNANEDCRGDGRGSAPSKNKRRAFLDLLLSVTDDEGNRLSHEDIREEVDTFMFEGHDTTAAAINWSLYLLGSNPEVQKKVDHELDDVFGKSDRPATVEDLKKLRYLECVIKETLRLFPSVPLFARSVSEDCEVAGYRVLKGTEAVIIPYALHRDPRYFPNPEEFQPERFFPENAQGRHPYAYVPFSAGPRNCIGQKFAVMEEKTILSCILRHFWIESNQKREELGLEGQLILRPSNGIWIKLKRRNADER</sequence>
<evidence type="ECO:0000250" key="1">
    <source>
        <dbReference type="UniProtKB" id="P51869"/>
    </source>
</evidence>
<evidence type="ECO:0000255" key="2"/>
<evidence type="ECO:0000269" key="3">
    <source>
    </source>
</evidence>
<evidence type="ECO:0000269" key="4">
    <source>
    </source>
</evidence>
<evidence type="ECO:0000269" key="5">
    <source>
    </source>
</evidence>
<evidence type="ECO:0000269" key="6">
    <source>
    </source>
</evidence>
<evidence type="ECO:0000269" key="7">
    <source>
    </source>
</evidence>
<evidence type="ECO:0000269" key="8">
    <source ref="3"/>
</evidence>
<evidence type="ECO:0000303" key="9">
    <source>
    </source>
</evidence>
<evidence type="ECO:0000305" key="10"/>
<evidence type="ECO:0000305" key="11">
    <source>
    </source>
</evidence>
<evidence type="ECO:0000305" key="12">
    <source>
    </source>
</evidence>
<protein>
    <recommendedName>
        <fullName>Cytochrome P450 4V2</fullName>
    </recommendedName>
    <alternativeName>
        <fullName evidence="12">Docosahexaenoic acid omega-hydroxylase CYP4V2</fullName>
        <ecNumber evidence="7">1.14.14.79</ecNumber>
    </alternativeName>
    <alternativeName>
        <fullName evidence="11">Long-chain fatty acid omega-monooxygenase</fullName>
        <ecNumber evidence="6">1.14.14.80</ecNumber>
    </alternativeName>
</protein>
<name>CP4V2_HUMAN</name>
<organism>
    <name type="scientific">Homo sapiens</name>
    <name type="common">Human</name>
    <dbReference type="NCBI Taxonomy" id="9606"/>
    <lineage>
        <taxon>Eukaryota</taxon>
        <taxon>Metazoa</taxon>
        <taxon>Chordata</taxon>
        <taxon>Craniata</taxon>
        <taxon>Vertebrata</taxon>
        <taxon>Euteleostomi</taxon>
        <taxon>Mammalia</taxon>
        <taxon>Eutheria</taxon>
        <taxon>Euarchontoglires</taxon>
        <taxon>Primates</taxon>
        <taxon>Haplorrhini</taxon>
        <taxon>Catarrhini</taxon>
        <taxon>Hominidae</taxon>
        <taxon>Homo</taxon>
    </lineage>
</organism>
<keyword id="KW-0025">Alternative splicing</keyword>
<keyword id="KW-1212">Corneal dystrophy</keyword>
<keyword id="KW-0225">Disease variant</keyword>
<keyword id="KW-0256">Endoplasmic reticulum</keyword>
<keyword id="KW-0349">Heme</keyword>
<keyword id="KW-0408">Iron</keyword>
<keyword id="KW-0443">Lipid metabolism</keyword>
<keyword id="KW-0472">Membrane</keyword>
<keyword id="KW-0479">Metal-binding</keyword>
<keyword id="KW-0503">Monooxygenase</keyword>
<keyword id="KW-0521">NADP</keyword>
<keyword id="KW-0560">Oxidoreductase</keyword>
<keyword id="KW-1267">Proteomics identification</keyword>
<keyword id="KW-1185">Reference proteome</keyword>
<keyword id="KW-0716">Sensory transduction</keyword>
<keyword id="KW-0812">Transmembrane</keyword>
<keyword id="KW-1133">Transmembrane helix</keyword>
<keyword id="KW-0844">Vision</keyword>
<comment type="function">
    <text evidence="6 7">A cytochrome P450 monooxygenase involved in fatty acid metabolism in the eye. Catalyzes the omega-hydroxylation of polyunsaturated fatty acids (PUFAs) docosahexaenoate (DHA) and its precursor eicosapentaenoate (EPA), and may contribute to the homeostasis of these retinal PUFAs (PubMed:22772592). Omega hydroxylates saturated fatty acids such as laurate, myristate and palmitate, the catalytic efficiency decreasing in the following order: myristate &gt; laurate &gt; palmitate (C14&gt;C12&gt;C16) (PubMed:19661213). Mechanistically, uses molecular oxygen inserting one oxygen atom into a substrate, and reducing the second into a water molecule, with two electrons provided by NADPH via cytochrome P450 reductase (CPR; NADPH-ferrihemoprotein reductase).</text>
</comment>
<comment type="catalytic activity">
    <reaction evidence="6">
        <text>dodecanoate + reduced [NADPH--hemoprotein reductase] + O2 = 12-hydroxydodecanoate + oxidized [NADPH--hemoprotein reductase] + H2O + H(+)</text>
        <dbReference type="Rhea" id="RHEA:38947"/>
        <dbReference type="Rhea" id="RHEA-COMP:11964"/>
        <dbReference type="Rhea" id="RHEA-COMP:11965"/>
        <dbReference type="ChEBI" id="CHEBI:15377"/>
        <dbReference type="ChEBI" id="CHEBI:15378"/>
        <dbReference type="ChEBI" id="CHEBI:15379"/>
        <dbReference type="ChEBI" id="CHEBI:18262"/>
        <dbReference type="ChEBI" id="CHEBI:36204"/>
        <dbReference type="ChEBI" id="CHEBI:57618"/>
        <dbReference type="ChEBI" id="CHEBI:58210"/>
    </reaction>
    <physiologicalReaction direction="left-to-right" evidence="11">
        <dbReference type="Rhea" id="RHEA:38948"/>
    </physiologicalReaction>
</comment>
<comment type="catalytic activity">
    <reaction evidence="6">
        <text>tetradecanoate + reduced [NADPH--hemoprotein reductase] + O2 = 14-hydroxytetradecanoate + oxidized [NADPH--hemoprotein reductase] + H2O + H(+)</text>
        <dbReference type="Rhea" id="RHEA:40203"/>
        <dbReference type="Rhea" id="RHEA-COMP:11964"/>
        <dbReference type="Rhea" id="RHEA-COMP:11965"/>
        <dbReference type="ChEBI" id="CHEBI:15377"/>
        <dbReference type="ChEBI" id="CHEBI:15378"/>
        <dbReference type="ChEBI" id="CHEBI:15379"/>
        <dbReference type="ChEBI" id="CHEBI:30807"/>
        <dbReference type="ChEBI" id="CHEBI:57618"/>
        <dbReference type="ChEBI" id="CHEBI:58210"/>
        <dbReference type="ChEBI" id="CHEBI:77033"/>
    </reaction>
    <physiologicalReaction direction="left-to-right" evidence="11">
        <dbReference type="Rhea" id="RHEA:40204"/>
    </physiologicalReaction>
</comment>
<comment type="catalytic activity">
    <reaction evidence="6">
        <text>hexadecanoate + reduced [NADPH--hemoprotein reductase] + O2 = 16-hydroxyhexadecanoate + oxidized [NADPH--hemoprotein reductase] + H2O + H(+)</text>
        <dbReference type="Rhea" id="RHEA:40199"/>
        <dbReference type="Rhea" id="RHEA-COMP:11964"/>
        <dbReference type="Rhea" id="RHEA-COMP:11965"/>
        <dbReference type="ChEBI" id="CHEBI:7896"/>
        <dbReference type="ChEBI" id="CHEBI:15377"/>
        <dbReference type="ChEBI" id="CHEBI:15378"/>
        <dbReference type="ChEBI" id="CHEBI:15379"/>
        <dbReference type="ChEBI" id="CHEBI:55329"/>
        <dbReference type="ChEBI" id="CHEBI:57618"/>
        <dbReference type="ChEBI" id="CHEBI:58210"/>
        <dbReference type="EC" id="1.14.14.80"/>
    </reaction>
    <physiologicalReaction direction="left-to-right" evidence="11">
        <dbReference type="Rhea" id="RHEA:40200"/>
    </physiologicalReaction>
</comment>
<comment type="catalytic activity">
    <reaction evidence="7">
        <text>(5Z,8Z,11Z,14Z,17Z)-eicosapentaenoate + reduced [NADPH--hemoprotein reductase] + O2 = 20-hydroxy-(5Z,8Z,11Z,14Z,17Z)-eicosapentaenoate + oxidized [NADPH--hemoprotein reductase] + H2O + H(+)</text>
        <dbReference type="Rhea" id="RHEA:39791"/>
        <dbReference type="Rhea" id="RHEA-COMP:11964"/>
        <dbReference type="Rhea" id="RHEA-COMP:11965"/>
        <dbReference type="ChEBI" id="CHEBI:15377"/>
        <dbReference type="ChEBI" id="CHEBI:15378"/>
        <dbReference type="ChEBI" id="CHEBI:15379"/>
        <dbReference type="ChEBI" id="CHEBI:57618"/>
        <dbReference type="ChEBI" id="CHEBI:58210"/>
        <dbReference type="ChEBI" id="CHEBI:58562"/>
        <dbReference type="ChEBI" id="CHEBI:76639"/>
    </reaction>
    <physiologicalReaction direction="left-to-right" evidence="12">
        <dbReference type="Rhea" id="RHEA:39792"/>
    </physiologicalReaction>
</comment>
<comment type="catalytic activity">
    <reaction evidence="7">
        <text>(4Z,7Z,10Z,13Z,16Z,19Z)-docosahexaenoate + reduced [NADPH--hemoprotein reductase] + O2 = 22-hydroxy-(4Z,7Z,10Z,13Z,16Z,19Z)-docosahexaenoate + oxidized [NADPH--hemoprotein reductase] + H2O + H(+)</text>
        <dbReference type="Rhea" id="RHEA:40155"/>
        <dbReference type="Rhea" id="RHEA-COMP:11964"/>
        <dbReference type="Rhea" id="RHEA-COMP:11965"/>
        <dbReference type="ChEBI" id="CHEBI:15377"/>
        <dbReference type="ChEBI" id="CHEBI:15378"/>
        <dbReference type="ChEBI" id="CHEBI:15379"/>
        <dbReference type="ChEBI" id="CHEBI:57618"/>
        <dbReference type="ChEBI" id="CHEBI:58210"/>
        <dbReference type="ChEBI" id="CHEBI:77015"/>
        <dbReference type="ChEBI" id="CHEBI:77016"/>
        <dbReference type="EC" id="1.14.14.79"/>
    </reaction>
    <physiologicalReaction direction="left-to-right" evidence="12">
        <dbReference type="Rhea" id="RHEA:40156"/>
    </physiologicalReaction>
</comment>
<comment type="cofactor">
    <cofactor evidence="1">
        <name>heme</name>
        <dbReference type="ChEBI" id="CHEBI:30413"/>
    </cofactor>
</comment>
<comment type="activity regulation">
    <text evidence="6">Inhibited by N-hydroxy-N'-(4-n-butyl-2-methylphenyl formamidine)(HET0016) with an IC(50) of 38 nM.</text>
</comment>
<comment type="biophysicochemical properties">
    <kinetics>
        <KM evidence="6">65 uM for myristic acid</KM>
        <KM evidence="6">140 uM for lauric acid</KM>
        <KM evidence="6">430 uM for palmitic acid</KM>
        <text evidence="6">Vmax is nearly the same for myristic acid and for lauric acid and reduced about 30% for palmitic acid.</text>
    </kinetics>
</comment>
<comment type="pathway">
    <text evidence="11 12">Lipid metabolism; fatty acid metabolism.</text>
</comment>
<comment type="interaction">
    <interactant intactId="EBI-3925755">
        <id>Q6ZWL3</id>
    </interactant>
    <interactant intactId="EBI-6929453">
        <id>O43716</id>
        <label>GATC</label>
    </interactant>
    <organismsDiffer>false</organismsDiffer>
    <experiments>2</experiments>
</comment>
<comment type="subcellular location">
    <subcellularLocation>
        <location evidence="7">Endoplasmic reticulum membrane</location>
        <topology evidence="10">Single-pass membrane protein</topology>
    </subcellularLocation>
</comment>
<comment type="alternative products">
    <event type="alternative splicing"/>
    <isoform>
        <id>Q6ZWL3-1</id>
        <name>1</name>
        <sequence type="displayed"/>
    </isoform>
    <isoform>
        <id>Q6ZWL3-2</id>
        <name>2</name>
        <sequence type="described" ref="VSP_014918"/>
    </isoform>
</comment>
<comment type="tissue specificity">
    <text evidence="4 7">Broadly expressed. Detected in heart, brain, placenta, lung, liver, skeletal muscle, kidney, pancreas, retina, retinal pigment epithelium (RPE) and lymphocytes.</text>
</comment>
<comment type="disease" evidence="4 7">
    <disease id="DI-01280">
        <name>Bietti crystalline corneoretinal dystrophy</name>
        <acronym>BCD</acronym>
        <description>An autosomal recessive ocular disease characterized by retinal degeneration and marginal corneal dystrophy. Typical features include multiple glistening intraretinal crystals scattered over the fundus, a characteristic degeneration of the retina, and sclerosis of the choroidal vessels, ultimately resulting in progressive night blindness and constriction of the visual field. Most patients have similar crystals at the corneoscleral limbus. Patients develop decreased vision, nyctalopia, and paracentral scotomata between the 2nd and 4th decade of life. Later, they develop peripheral visual field loss and marked visual impairment, usually progressing to legal blindness by the 5th or 6th decade of life.</description>
        <dbReference type="MIM" id="210370"/>
    </disease>
    <text>The disease is caused by variants affecting the gene represented in this entry.</text>
</comment>
<comment type="similarity">
    <text evidence="10">Belongs to the cytochrome P450 family.</text>
</comment>
<proteinExistence type="evidence at protein level"/>
<reference key="1">
    <citation type="journal article" date="2004" name="Am. J. Hum. Genet.">
        <title>Bietti crystalline corneoretinal dystrophy is caused by mutations in the novel gene CYP4V2.</title>
        <authorList>
            <person name="Li A."/>
            <person name="Jiao X."/>
            <person name="Munier F.L."/>
            <person name="Schorderet D.F."/>
            <person name="Yao W."/>
            <person name="Iwata F."/>
            <person name="Hayakawa M."/>
            <person name="Kanai A."/>
            <person name="Shy Chen M."/>
            <person name="Alan Lewis R."/>
            <person name="Heckenlively J."/>
            <person name="Weleber R.G."/>
            <person name="Traboulsi E.I."/>
            <person name="Zhang Q."/>
            <person name="Xiao X."/>
            <person name="Kaiser-Kupfer M."/>
            <person name="Sergeev Y.V."/>
            <person name="Hejtmancik J.F."/>
        </authorList>
    </citation>
    <scope>NUCLEOTIDE SEQUENCE [MRNA] (ISOFORM 1)</scope>
    <scope>TISSUE SPECIFICITY</scope>
    <scope>VARIANTS BCD ARG-44; SER-61; ASP-79; THR-111; VAL-123; LYS-259; PRO-331; PRO-341 AND HIS-508</scope>
    <source>
        <tissue>Retina</tissue>
    </source>
</reference>
<reference key="2">
    <citation type="journal article" date="2004" name="Nat. Genet.">
        <title>Complete sequencing and characterization of 21,243 full-length human cDNAs.</title>
        <authorList>
            <person name="Ota T."/>
            <person name="Suzuki Y."/>
            <person name="Nishikawa T."/>
            <person name="Otsuki T."/>
            <person name="Sugiyama T."/>
            <person name="Irie R."/>
            <person name="Wakamatsu A."/>
            <person name="Hayashi K."/>
            <person name="Sato H."/>
            <person name="Nagai K."/>
            <person name="Kimura K."/>
            <person name="Makita H."/>
            <person name="Sekine M."/>
            <person name="Obayashi M."/>
            <person name="Nishi T."/>
            <person name="Shibahara T."/>
            <person name="Tanaka T."/>
            <person name="Ishii S."/>
            <person name="Yamamoto J."/>
            <person name="Saito K."/>
            <person name="Kawai Y."/>
            <person name="Isono Y."/>
            <person name="Nakamura Y."/>
            <person name="Nagahari K."/>
            <person name="Murakami K."/>
            <person name="Yasuda T."/>
            <person name="Iwayanagi T."/>
            <person name="Wagatsuma M."/>
            <person name="Shiratori A."/>
            <person name="Sudo H."/>
            <person name="Hosoiri T."/>
            <person name="Kaku Y."/>
            <person name="Kodaira H."/>
            <person name="Kondo H."/>
            <person name="Sugawara M."/>
            <person name="Takahashi M."/>
            <person name="Kanda K."/>
            <person name="Yokoi T."/>
            <person name="Furuya T."/>
            <person name="Kikkawa E."/>
            <person name="Omura Y."/>
            <person name="Abe K."/>
            <person name="Kamihara K."/>
            <person name="Katsuta N."/>
            <person name="Sato K."/>
            <person name="Tanikawa M."/>
            <person name="Yamazaki M."/>
            <person name="Ninomiya K."/>
            <person name="Ishibashi T."/>
            <person name="Yamashita H."/>
            <person name="Murakawa K."/>
            <person name="Fujimori K."/>
            <person name="Tanai H."/>
            <person name="Kimata M."/>
            <person name="Watanabe M."/>
            <person name="Hiraoka S."/>
            <person name="Chiba Y."/>
            <person name="Ishida S."/>
            <person name="Ono Y."/>
            <person name="Takiguchi S."/>
            <person name="Watanabe S."/>
            <person name="Yosida M."/>
            <person name="Hotuta T."/>
            <person name="Kusano J."/>
            <person name="Kanehori K."/>
            <person name="Takahashi-Fujii A."/>
            <person name="Hara H."/>
            <person name="Tanase T.-O."/>
            <person name="Nomura Y."/>
            <person name="Togiya S."/>
            <person name="Komai F."/>
            <person name="Hara R."/>
            <person name="Takeuchi K."/>
            <person name="Arita M."/>
            <person name="Imose N."/>
            <person name="Musashino K."/>
            <person name="Yuuki H."/>
            <person name="Oshima A."/>
            <person name="Sasaki N."/>
            <person name="Aotsuka S."/>
            <person name="Yoshikawa Y."/>
            <person name="Matsunawa H."/>
            <person name="Ichihara T."/>
            <person name="Shiohata N."/>
            <person name="Sano S."/>
            <person name="Moriya S."/>
            <person name="Momiyama H."/>
            <person name="Satoh N."/>
            <person name="Takami S."/>
            <person name="Terashima Y."/>
            <person name="Suzuki O."/>
            <person name="Nakagawa S."/>
            <person name="Senoh A."/>
            <person name="Mizoguchi H."/>
            <person name="Goto Y."/>
            <person name="Shimizu F."/>
            <person name="Wakebe H."/>
            <person name="Hishigaki H."/>
            <person name="Watanabe T."/>
            <person name="Sugiyama A."/>
            <person name="Takemoto M."/>
            <person name="Kawakami B."/>
            <person name="Yamazaki M."/>
            <person name="Watanabe K."/>
            <person name="Kumagai A."/>
            <person name="Itakura S."/>
            <person name="Fukuzumi Y."/>
            <person name="Fujimori Y."/>
            <person name="Komiyama M."/>
            <person name="Tashiro H."/>
            <person name="Tanigami A."/>
            <person name="Fujiwara T."/>
            <person name="Ono T."/>
            <person name="Yamada K."/>
            <person name="Fujii Y."/>
            <person name="Ozaki K."/>
            <person name="Hirao M."/>
            <person name="Ohmori Y."/>
            <person name="Kawabata A."/>
            <person name="Hikiji T."/>
            <person name="Kobatake N."/>
            <person name="Inagaki H."/>
            <person name="Ikema Y."/>
            <person name="Okamoto S."/>
            <person name="Okitani R."/>
            <person name="Kawakami T."/>
            <person name="Noguchi S."/>
            <person name="Itoh T."/>
            <person name="Shigeta K."/>
            <person name="Senba T."/>
            <person name="Matsumura K."/>
            <person name="Nakajima Y."/>
            <person name="Mizuno T."/>
            <person name="Morinaga M."/>
            <person name="Sasaki M."/>
            <person name="Togashi T."/>
            <person name="Oyama M."/>
            <person name="Hata H."/>
            <person name="Watanabe M."/>
            <person name="Komatsu T."/>
            <person name="Mizushima-Sugano J."/>
            <person name="Satoh T."/>
            <person name="Shirai Y."/>
            <person name="Takahashi Y."/>
            <person name="Nakagawa K."/>
            <person name="Okumura K."/>
            <person name="Nagase T."/>
            <person name="Nomura N."/>
            <person name="Kikuchi H."/>
            <person name="Masuho Y."/>
            <person name="Yamashita R."/>
            <person name="Nakai K."/>
            <person name="Yada T."/>
            <person name="Nakamura Y."/>
            <person name="Ohara O."/>
            <person name="Isogai T."/>
            <person name="Sugano S."/>
        </authorList>
    </citation>
    <scope>NUCLEOTIDE SEQUENCE [LARGE SCALE MRNA] (ISOFORMS 1 AND 2)</scope>
    <scope>VARIANT LYS-259</scope>
    <source>
        <tissue>Kidney</tissue>
        <tissue>Uterus</tissue>
    </source>
</reference>
<reference key="3">
    <citation type="submission" date="2008-11" db="EMBL/GenBank/DDBJ databases">
        <authorList>
            <consortium name="NIEHS SNPs program"/>
        </authorList>
    </citation>
    <scope>NUCLEOTIDE SEQUENCE [GENOMIC DNA]</scope>
    <scope>VARIANTS VAL-22; ASN-213; LYS-275; ILE-372 AND GLN-443</scope>
</reference>
<reference key="4">
    <citation type="journal article" date="2005" name="Nature">
        <title>Generation and annotation of the DNA sequences of human chromosomes 2 and 4.</title>
        <authorList>
            <person name="Hillier L.W."/>
            <person name="Graves T.A."/>
            <person name="Fulton R.S."/>
            <person name="Fulton L.A."/>
            <person name="Pepin K.H."/>
            <person name="Minx P."/>
            <person name="Wagner-McPherson C."/>
            <person name="Layman D."/>
            <person name="Wylie K."/>
            <person name="Sekhon M."/>
            <person name="Becker M.C."/>
            <person name="Fewell G.A."/>
            <person name="Delehaunty K.D."/>
            <person name="Miner T.L."/>
            <person name="Nash W.E."/>
            <person name="Kremitzki C."/>
            <person name="Oddy L."/>
            <person name="Du H."/>
            <person name="Sun H."/>
            <person name="Bradshaw-Cordum H."/>
            <person name="Ali J."/>
            <person name="Carter J."/>
            <person name="Cordes M."/>
            <person name="Harris A."/>
            <person name="Isak A."/>
            <person name="van Brunt A."/>
            <person name="Nguyen C."/>
            <person name="Du F."/>
            <person name="Courtney L."/>
            <person name="Kalicki J."/>
            <person name="Ozersky P."/>
            <person name="Abbott S."/>
            <person name="Armstrong J."/>
            <person name="Belter E.A."/>
            <person name="Caruso L."/>
            <person name="Cedroni M."/>
            <person name="Cotton M."/>
            <person name="Davidson T."/>
            <person name="Desai A."/>
            <person name="Elliott G."/>
            <person name="Erb T."/>
            <person name="Fronick C."/>
            <person name="Gaige T."/>
            <person name="Haakenson W."/>
            <person name="Haglund K."/>
            <person name="Holmes A."/>
            <person name="Harkins R."/>
            <person name="Kim K."/>
            <person name="Kruchowski S.S."/>
            <person name="Strong C.M."/>
            <person name="Grewal N."/>
            <person name="Goyea E."/>
            <person name="Hou S."/>
            <person name="Levy A."/>
            <person name="Martinka S."/>
            <person name="Mead K."/>
            <person name="McLellan M.D."/>
            <person name="Meyer R."/>
            <person name="Randall-Maher J."/>
            <person name="Tomlinson C."/>
            <person name="Dauphin-Kohlberg S."/>
            <person name="Kozlowicz-Reilly A."/>
            <person name="Shah N."/>
            <person name="Swearengen-Shahid S."/>
            <person name="Snider J."/>
            <person name="Strong J.T."/>
            <person name="Thompson J."/>
            <person name="Yoakum M."/>
            <person name="Leonard S."/>
            <person name="Pearman C."/>
            <person name="Trani L."/>
            <person name="Radionenko M."/>
            <person name="Waligorski J.E."/>
            <person name="Wang C."/>
            <person name="Rock S.M."/>
            <person name="Tin-Wollam A.-M."/>
            <person name="Maupin R."/>
            <person name="Latreille P."/>
            <person name="Wendl M.C."/>
            <person name="Yang S.-P."/>
            <person name="Pohl C."/>
            <person name="Wallis J.W."/>
            <person name="Spieth J."/>
            <person name="Bieri T.A."/>
            <person name="Berkowicz N."/>
            <person name="Nelson J.O."/>
            <person name="Osborne J."/>
            <person name="Ding L."/>
            <person name="Meyer R."/>
            <person name="Sabo A."/>
            <person name="Shotland Y."/>
            <person name="Sinha P."/>
            <person name="Wohldmann P.E."/>
            <person name="Cook L.L."/>
            <person name="Hickenbotham M.T."/>
            <person name="Eldred J."/>
            <person name="Williams D."/>
            <person name="Jones T.A."/>
            <person name="She X."/>
            <person name="Ciccarelli F.D."/>
            <person name="Izaurralde E."/>
            <person name="Taylor J."/>
            <person name="Schmutz J."/>
            <person name="Myers R.M."/>
            <person name="Cox D.R."/>
            <person name="Huang X."/>
            <person name="McPherson J.D."/>
            <person name="Mardis E.R."/>
            <person name="Clifton S.W."/>
            <person name="Warren W.C."/>
            <person name="Chinwalla A.T."/>
            <person name="Eddy S.R."/>
            <person name="Marra M.A."/>
            <person name="Ovcharenko I."/>
            <person name="Furey T.S."/>
            <person name="Miller W."/>
            <person name="Eichler E.E."/>
            <person name="Bork P."/>
            <person name="Suyama M."/>
            <person name="Torrents D."/>
            <person name="Waterston R.H."/>
            <person name="Wilson R.K."/>
        </authorList>
    </citation>
    <scope>NUCLEOTIDE SEQUENCE [LARGE SCALE GENOMIC DNA]</scope>
</reference>
<reference key="5">
    <citation type="journal article" date="2004" name="Genome Res.">
        <title>The status, quality, and expansion of the NIH full-length cDNA project: the Mammalian Gene Collection (MGC).</title>
        <authorList>
            <consortium name="The MGC Project Team"/>
        </authorList>
    </citation>
    <scope>NUCLEOTIDE SEQUENCE [LARGE SCALE MRNA] (ISOFORM 1)</scope>
    <scope>VARIANT LYS-259</scope>
    <source>
        <tissue>Placenta</tissue>
    </source>
</reference>
<reference key="6">
    <citation type="journal article" date="2009" name="Drug Metab. Dispos.">
        <title>Expression and characterization of CYP4V2 as a fatty acid omega-hydroxylase.</title>
        <authorList>
            <person name="Nakano M."/>
            <person name="Kelly E.J."/>
            <person name="Rettie A.E."/>
        </authorList>
    </citation>
    <scope>CATALYTIC ACTIVITY</scope>
    <scope>FUNCTION</scope>
    <scope>BIOPHYSICOCHEMICAL PROPERTIES</scope>
    <scope>SUBSTRATE SPECIFICITY</scope>
    <scope>ACTIVITY REGULATION</scope>
    <scope>PATHWAY</scope>
</reference>
<reference key="7">
    <citation type="journal article" date="2012" name="Mol. Pharmacol.">
        <title>CYP4V2 in Bietti's crystalline dystrophy: ocular localization, metabolism of omega-3-polyunsaturated fatty acids, and functional deficit of the p.H331P variant.</title>
        <authorList>
            <person name="Nakano M."/>
            <person name="Kelly E.J."/>
            <person name="Wiek C."/>
            <person name="Hanenberg H."/>
            <person name="Rettie A.E."/>
        </authorList>
    </citation>
    <scope>FUNCTION</scope>
    <scope>CATALYTIC ACTIVITY</scope>
    <scope>SUBCELLULAR LOCATION</scope>
    <scope>TISSUE SPECIFICITY</scope>
    <scope>CHARACTERIZATION OF VARIANT BCD PRO-331</scope>
    <scope>PATHWAY</scope>
</reference>
<reference key="8">
    <citation type="journal article" date="2014" name="J. Proteomics">
        <title>An enzyme assisted RP-RPLC approach for in-depth analysis of human liver phosphoproteome.</title>
        <authorList>
            <person name="Bian Y."/>
            <person name="Song C."/>
            <person name="Cheng K."/>
            <person name="Dong M."/>
            <person name="Wang F."/>
            <person name="Huang J."/>
            <person name="Sun D."/>
            <person name="Wang L."/>
            <person name="Ye M."/>
            <person name="Zou H."/>
        </authorList>
    </citation>
    <scope>IDENTIFICATION BY MASS SPECTROMETRY [LARGE SCALE ANALYSIS]</scope>
    <source>
        <tissue>Liver</tissue>
    </source>
</reference>
<dbReference type="EC" id="1.14.14.79" evidence="7"/>
<dbReference type="EC" id="1.14.14.80" evidence="6"/>
<dbReference type="EMBL" id="AY422002">
    <property type="protein sequence ID" value="AAR31180.1"/>
    <property type="molecule type" value="mRNA"/>
</dbReference>
<dbReference type="EMBL" id="AK122600">
    <property type="protein sequence ID" value="BAC85487.1"/>
    <property type="molecule type" value="mRNA"/>
</dbReference>
<dbReference type="EMBL" id="AK126473">
    <property type="protein sequence ID" value="BAC86562.1"/>
    <property type="molecule type" value="mRNA"/>
</dbReference>
<dbReference type="EMBL" id="FJ440682">
    <property type="protein sequence ID" value="ACK44069.1"/>
    <property type="molecule type" value="Genomic_DNA"/>
</dbReference>
<dbReference type="EMBL" id="AC110771">
    <property type="status" value="NOT_ANNOTATED_CDS"/>
    <property type="molecule type" value="Genomic_DNA"/>
</dbReference>
<dbReference type="EMBL" id="BC060857">
    <property type="protein sequence ID" value="AAH60857.1"/>
    <property type="molecule type" value="mRNA"/>
</dbReference>
<dbReference type="CCDS" id="CCDS34119.1">
    <molecule id="Q6ZWL3-1"/>
</dbReference>
<dbReference type="RefSeq" id="NP_997235.3">
    <molecule id="Q6ZWL3-1"/>
    <property type="nucleotide sequence ID" value="NM_207352.4"/>
</dbReference>
<dbReference type="SMR" id="Q6ZWL3"/>
<dbReference type="BioGRID" id="130113">
    <property type="interactions" value="12"/>
</dbReference>
<dbReference type="FunCoup" id="Q6ZWL3">
    <property type="interactions" value="435"/>
</dbReference>
<dbReference type="IntAct" id="Q6ZWL3">
    <property type="interactions" value="4"/>
</dbReference>
<dbReference type="STRING" id="9606.ENSP00000368079"/>
<dbReference type="SwissLipids" id="SLP:000000542"/>
<dbReference type="iPTMnet" id="Q6ZWL3"/>
<dbReference type="PhosphoSitePlus" id="Q6ZWL3"/>
<dbReference type="BioMuta" id="CYP4V2"/>
<dbReference type="DMDM" id="296434466"/>
<dbReference type="jPOST" id="Q6ZWL3"/>
<dbReference type="MassIVE" id="Q6ZWL3"/>
<dbReference type="PaxDb" id="9606-ENSP00000368079"/>
<dbReference type="PeptideAtlas" id="Q6ZWL3"/>
<dbReference type="ProteomicsDB" id="68494">
    <molecule id="Q6ZWL3-1"/>
</dbReference>
<dbReference type="ProteomicsDB" id="68495">
    <molecule id="Q6ZWL3-2"/>
</dbReference>
<dbReference type="Antibodypedia" id="29101">
    <property type="antibodies" value="202 antibodies from 24 providers"/>
</dbReference>
<dbReference type="DNASU" id="285440"/>
<dbReference type="Ensembl" id="ENST00000378802.5">
    <molecule id="Q6ZWL3-1"/>
    <property type="protein sequence ID" value="ENSP00000368079.4"/>
    <property type="gene ID" value="ENSG00000145476.16"/>
</dbReference>
<dbReference type="GeneID" id="285440"/>
<dbReference type="KEGG" id="hsa:285440"/>
<dbReference type="MANE-Select" id="ENST00000378802.5">
    <property type="protein sequence ID" value="ENSP00000368079.4"/>
    <property type="RefSeq nucleotide sequence ID" value="NM_207352.4"/>
    <property type="RefSeq protein sequence ID" value="NP_997235.3"/>
</dbReference>
<dbReference type="UCSC" id="uc003iyw.5">
    <molecule id="Q6ZWL3-1"/>
    <property type="organism name" value="human"/>
</dbReference>
<dbReference type="AGR" id="HGNC:23198"/>
<dbReference type="CTD" id="285440"/>
<dbReference type="DisGeNET" id="285440"/>
<dbReference type="GeneCards" id="CYP4V2"/>
<dbReference type="GeneReviews" id="CYP4V2"/>
<dbReference type="HGNC" id="HGNC:23198">
    <property type="gene designation" value="CYP4V2"/>
</dbReference>
<dbReference type="HPA" id="ENSG00000145476">
    <property type="expression patterns" value="Tissue enhanced (liver)"/>
</dbReference>
<dbReference type="MalaCards" id="CYP4V2"/>
<dbReference type="MIM" id="210370">
    <property type="type" value="phenotype"/>
</dbReference>
<dbReference type="MIM" id="608614">
    <property type="type" value="gene"/>
</dbReference>
<dbReference type="neXtProt" id="NX_Q6ZWL3"/>
<dbReference type="OpenTargets" id="ENSG00000145476"/>
<dbReference type="Orphanet" id="41751">
    <property type="disease" value="Bietti crystalline dystrophy"/>
</dbReference>
<dbReference type="PharmGKB" id="PA134912942"/>
<dbReference type="VEuPathDB" id="HostDB:ENSG00000145476"/>
<dbReference type="eggNOG" id="KOG0157">
    <property type="taxonomic scope" value="Eukaryota"/>
</dbReference>
<dbReference type="GeneTree" id="ENSGT00940000157278"/>
<dbReference type="HOGENOM" id="CLU_001570_5_1_1"/>
<dbReference type="InParanoid" id="Q6ZWL3"/>
<dbReference type="OMA" id="QQMHLFS"/>
<dbReference type="OrthoDB" id="1470350at2759"/>
<dbReference type="PAN-GO" id="Q6ZWL3">
    <property type="GO annotations" value="1 GO annotation based on evolutionary models"/>
</dbReference>
<dbReference type="PhylomeDB" id="Q6ZWL3"/>
<dbReference type="TreeFam" id="TF105088"/>
<dbReference type="BRENDA" id="1.14.14.79">
    <property type="organism ID" value="2681"/>
</dbReference>
<dbReference type="PathwayCommons" id="Q6ZWL3"/>
<dbReference type="Reactome" id="R-HSA-211976">
    <property type="pathway name" value="Endogenous sterols"/>
</dbReference>
<dbReference type="Reactome" id="R-HSA-2453902">
    <property type="pathway name" value="The canonical retinoid cycle in rods (twilight vision)"/>
</dbReference>
<dbReference type="SABIO-RK" id="Q6ZWL3"/>
<dbReference type="SignaLink" id="Q6ZWL3"/>
<dbReference type="UniPathway" id="UPA00199"/>
<dbReference type="BioGRID-ORCS" id="285440">
    <property type="hits" value="9 hits in 1159 CRISPR screens"/>
</dbReference>
<dbReference type="ChiTaRS" id="CYP4V2">
    <property type="organism name" value="human"/>
</dbReference>
<dbReference type="GeneWiki" id="CYP4V2"/>
<dbReference type="GenomeRNAi" id="285440"/>
<dbReference type="Pharos" id="Q6ZWL3">
    <property type="development level" value="Tbio"/>
</dbReference>
<dbReference type="PRO" id="PR:Q6ZWL3"/>
<dbReference type="Proteomes" id="UP000005640">
    <property type="component" value="Chromosome 4"/>
</dbReference>
<dbReference type="RNAct" id="Q6ZWL3">
    <property type="molecule type" value="protein"/>
</dbReference>
<dbReference type="Bgee" id="ENSG00000145476">
    <property type="expression patterns" value="Expressed in kidney epithelium and 178 other cell types or tissues"/>
</dbReference>
<dbReference type="GO" id="GO:0005789">
    <property type="term" value="C:endoplasmic reticulum membrane"/>
    <property type="evidence" value="ECO:0000314"/>
    <property type="project" value="UniProtKB"/>
</dbReference>
<dbReference type="GO" id="GO:0020037">
    <property type="term" value="F:heme binding"/>
    <property type="evidence" value="ECO:0007669"/>
    <property type="project" value="InterPro"/>
</dbReference>
<dbReference type="GO" id="GO:0005506">
    <property type="term" value="F:iron ion binding"/>
    <property type="evidence" value="ECO:0007669"/>
    <property type="project" value="InterPro"/>
</dbReference>
<dbReference type="GO" id="GO:0102033">
    <property type="term" value="F:long-chain fatty acid omega-hydroxylase activity"/>
    <property type="evidence" value="ECO:0007669"/>
    <property type="project" value="UniProtKB-EC"/>
</dbReference>
<dbReference type="GO" id="GO:0016709">
    <property type="term" value="F:oxidoreductase activity, acting on paired donors, with incorporation or reduction of molecular oxygen, NAD(P)H as one donor, and incorporation of one atom of oxygen"/>
    <property type="evidence" value="ECO:0000304"/>
    <property type="project" value="Reactome"/>
</dbReference>
<dbReference type="GO" id="GO:0010430">
    <property type="term" value="P:fatty acid omega-oxidation"/>
    <property type="evidence" value="ECO:0000314"/>
    <property type="project" value="UniProtKB"/>
</dbReference>
<dbReference type="GO" id="GO:0001523">
    <property type="term" value="P:retinoid metabolic process"/>
    <property type="evidence" value="ECO:0000304"/>
    <property type="project" value="Reactome"/>
</dbReference>
<dbReference type="GO" id="GO:0016125">
    <property type="term" value="P:sterol metabolic process"/>
    <property type="evidence" value="ECO:0000304"/>
    <property type="project" value="Reactome"/>
</dbReference>
<dbReference type="GO" id="GO:0007601">
    <property type="term" value="P:visual perception"/>
    <property type="evidence" value="ECO:0007669"/>
    <property type="project" value="UniProtKB-KW"/>
</dbReference>
<dbReference type="CDD" id="cd20680">
    <property type="entry name" value="CYP4V"/>
    <property type="match status" value="1"/>
</dbReference>
<dbReference type="FunFam" id="1.10.630.10:FF:000035">
    <property type="entry name" value="CYtochrome P450 family"/>
    <property type="match status" value="1"/>
</dbReference>
<dbReference type="Gene3D" id="1.10.630.10">
    <property type="entry name" value="Cytochrome P450"/>
    <property type="match status" value="1"/>
</dbReference>
<dbReference type="InterPro" id="IPR001128">
    <property type="entry name" value="Cyt_P450"/>
</dbReference>
<dbReference type="InterPro" id="IPR017972">
    <property type="entry name" value="Cyt_P450_CS"/>
</dbReference>
<dbReference type="InterPro" id="IPR002401">
    <property type="entry name" value="Cyt_P450_E_grp-I"/>
</dbReference>
<dbReference type="InterPro" id="IPR036396">
    <property type="entry name" value="Cyt_P450_sf"/>
</dbReference>
<dbReference type="InterPro" id="IPR050196">
    <property type="entry name" value="Cytochrome_P450_Monoox"/>
</dbReference>
<dbReference type="PANTHER" id="PTHR24291:SF193">
    <property type="entry name" value="CYTOCHROME P450 4V2"/>
    <property type="match status" value="1"/>
</dbReference>
<dbReference type="PANTHER" id="PTHR24291">
    <property type="entry name" value="CYTOCHROME P450 FAMILY 4"/>
    <property type="match status" value="1"/>
</dbReference>
<dbReference type="Pfam" id="PF00067">
    <property type="entry name" value="p450"/>
    <property type="match status" value="1"/>
</dbReference>
<dbReference type="PRINTS" id="PR00463">
    <property type="entry name" value="EP450I"/>
</dbReference>
<dbReference type="PRINTS" id="PR00385">
    <property type="entry name" value="P450"/>
</dbReference>
<dbReference type="SUPFAM" id="SSF48264">
    <property type="entry name" value="Cytochrome P450"/>
    <property type="match status" value="1"/>
</dbReference>
<dbReference type="PROSITE" id="PS00086">
    <property type="entry name" value="CYTOCHROME_P450"/>
    <property type="match status" value="1"/>
</dbReference>
<gene>
    <name type="primary">CYP4V2</name>
</gene>
<feature type="chain" id="PRO_0000051859" description="Cytochrome P450 4V2">
    <location>
        <begin position="1"/>
        <end position="525"/>
    </location>
</feature>
<feature type="transmembrane region" description="Helical" evidence="2">
    <location>
        <begin position="13"/>
        <end position="33"/>
    </location>
</feature>
<feature type="binding site" description="covalent" evidence="1">
    <location>
        <position position="329"/>
    </location>
    <ligand>
        <name>heme</name>
        <dbReference type="ChEBI" id="CHEBI:30413"/>
    </ligand>
</feature>
<feature type="binding site" description="axial binding residue" evidence="1">
    <location>
        <position position="467"/>
    </location>
    <ligand>
        <name>heme</name>
        <dbReference type="ChEBI" id="CHEBI:30413"/>
    </ligand>
    <ligandPart>
        <name>Fe</name>
        <dbReference type="ChEBI" id="CHEBI:18248"/>
    </ligandPart>
</feature>
<feature type="splice variant" id="VSP_014918" description="In isoform 2." evidence="9">
    <location>
        <begin position="42"/>
        <end position="63"/>
    </location>
</feature>
<feature type="sequence variant" id="VAR_038606" description="In dbSNP:rs1055138." evidence="8">
    <original>L</original>
    <variation>V</variation>
    <location>
        <position position="22"/>
    </location>
</feature>
<feature type="sequence variant" id="VAR_023084" description="In BCD; dbSNP:rs119103282." evidence="4">
    <original>W</original>
    <variation>R</variation>
    <location>
        <position position="44"/>
    </location>
</feature>
<feature type="sequence variant" id="VAR_023085" description="In BCD; dbSNP:rs119103285." evidence="4">
    <original>G</original>
    <variation>S</variation>
    <location>
        <position position="61"/>
    </location>
</feature>
<feature type="sequence variant" id="VAR_023086" description="In BCD; dbSNP:rs199476185." evidence="4">
    <original>E</original>
    <variation>D</variation>
    <location>
        <position position="79"/>
    </location>
</feature>
<feature type="sequence variant" id="VAR_023087" description="In BCD; dbSNP:rs119103283." evidence="4">
    <original>I</original>
    <variation>T</variation>
    <location>
        <position position="111"/>
    </location>
</feature>
<feature type="sequence variant" id="VAR_023088" description="In BCD; dbSNP:rs149684063." evidence="4">
    <original>M</original>
    <variation>V</variation>
    <location>
        <position position="123"/>
    </location>
</feature>
<feature type="sequence variant" id="VAR_038607" description="In dbSNP:rs34331648." evidence="8">
    <original>S</original>
    <variation>N</variation>
    <location>
        <position position="213"/>
    </location>
</feature>
<feature type="sequence variant" id="VAR_033821" description="In dbSNP:rs13146272." evidence="3 4 5">
    <original>Q</original>
    <variation>K</variation>
    <location>
        <position position="259"/>
    </location>
</feature>
<feature type="sequence variant" id="VAR_055379" description="In dbSNP:rs34745240." evidence="8">
    <original>E</original>
    <variation>K</variation>
    <location>
        <position position="275"/>
    </location>
</feature>
<feature type="sequence variant" id="VAR_023089" description="In BCD; impaired omega hydroxylase activity; dbSNP:rs199476197." evidence="4 7">
    <original>H</original>
    <variation>P</variation>
    <location>
        <position position="331"/>
    </location>
</feature>
<feature type="sequence variant" id="VAR_023090" description="In BCD; dbSNP:rs199476199." evidence="4">
    <original>S</original>
    <variation>P</variation>
    <location>
        <position position="341"/>
    </location>
</feature>
<feature type="sequence variant" id="VAR_055380" description="In dbSNP:rs61755911." evidence="8">
    <original>V</original>
    <variation>I</variation>
    <location>
        <position position="372"/>
    </location>
</feature>
<feature type="sequence variant" id="VAR_055381" description="In dbSNP:rs72646291." evidence="8">
    <original>R</original>
    <variation>Q</variation>
    <location>
        <position position="443"/>
    </location>
</feature>
<feature type="sequence variant" id="VAR_023091" description="In BCD; dbSNP:rs119103284." evidence="4">
    <original>R</original>
    <variation>H</variation>
    <location>
        <position position="508"/>
    </location>
</feature>
<accession>Q6ZWL3</accession>
<accession>B7U6W2</accession>
<accession>Q6ZTM4</accession>